<accession>Q47VT2</accession>
<evidence type="ECO:0000255" key="1">
    <source>
        <dbReference type="HAMAP-Rule" id="MF_00532"/>
    </source>
</evidence>
<evidence type="ECO:0000305" key="2"/>
<name>RS9_COLP3</name>
<proteinExistence type="inferred from homology"/>
<organism>
    <name type="scientific">Colwellia psychrerythraea (strain 34H / ATCC BAA-681)</name>
    <name type="common">Vibrio psychroerythus</name>
    <dbReference type="NCBI Taxonomy" id="167879"/>
    <lineage>
        <taxon>Bacteria</taxon>
        <taxon>Pseudomonadati</taxon>
        <taxon>Pseudomonadota</taxon>
        <taxon>Gammaproteobacteria</taxon>
        <taxon>Alteromonadales</taxon>
        <taxon>Colwelliaceae</taxon>
        <taxon>Colwellia</taxon>
    </lineage>
</organism>
<gene>
    <name evidence="1" type="primary">rpsI</name>
    <name type="ordered locus">CPS_4442</name>
</gene>
<dbReference type="EMBL" id="CP000083">
    <property type="protein sequence ID" value="AAZ24369.1"/>
    <property type="molecule type" value="Genomic_DNA"/>
</dbReference>
<dbReference type="RefSeq" id="WP_011045171.1">
    <property type="nucleotide sequence ID" value="NC_003910.7"/>
</dbReference>
<dbReference type="SMR" id="Q47VT2"/>
<dbReference type="STRING" id="167879.CPS_4442"/>
<dbReference type="KEGG" id="cps:CPS_4442"/>
<dbReference type="eggNOG" id="COG0103">
    <property type="taxonomic scope" value="Bacteria"/>
</dbReference>
<dbReference type="HOGENOM" id="CLU_046483_2_1_6"/>
<dbReference type="Proteomes" id="UP000000547">
    <property type="component" value="Chromosome"/>
</dbReference>
<dbReference type="GO" id="GO:0022627">
    <property type="term" value="C:cytosolic small ribosomal subunit"/>
    <property type="evidence" value="ECO:0007669"/>
    <property type="project" value="TreeGrafter"/>
</dbReference>
<dbReference type="GO" id="GO:0003723">
    <property type="term" value="F:RNA binding"/>
    <property type="evidence" value="ECO:0007669"/>
    <property type="project" value="TreeGrafter"/>
</dbReference>
<dbReference type="GO" id="GO:0003735">
    <property type="term" value="F:structural constituent of ribosome"/>
    <property type="evidence" value="ECO:0007669"/>
    <property type="project" value="InterPro"/>
</dbReference>
<dbReference type="GO" id="GO:0006412">
    <property type="term" value="P:translation"/>
    <property type="evidence" value="ECO:0007669"/>
    <property type="project" value="UniProtKB-UniRule"/>
</dbReference>
<dbReference type="FunFam" id="3.30.230.10:FF:000001">
    <property type="entry name" value="30S ribosomal protein S9"/>
    <property type="match status" value="1"/>
</dbReference>
<dbReference type="Gene3D" id="3.30.230.10">
    <property type="match status" value="1"/>
</dbReference>
<dbReference type="HAMAP" id="MF_00532_B">
    <property type="entry name" value="Ribosomal_uS9_B"/>
    <property type="match status" value="1"/>
</dbReference>
<dbReference type="InterPro" id="IPR020568">
    <property type="entry name" value="Ribosomal_Su5_D2-typ_SF"/>
</dbReference>
<dbReference type="InterPro" id="IPR000754">
    <property type="entry name" value="Ribosomal_uS9"/>
</dbReference>
<dbReference type="InterPro" id="IPR023035">
    <property type="entry name" value="Ribosomal_uS9_bac/plastid"/>
</dbReference>
<dbReference type="InterPro" id="IPR020574">
    <property type="entry name" value="Ribosomal_uS9_CS"/>
</dbReference>
<dbReference type="InterPro" id="IPR014721">
    <property type="entry name" value="Ribsml_uS5_D2-typ_fold_subgr"/>
</dbReference>
<dbReference type="NCBIfam" id="NF001099">
    <property type="entry name" value="PRK00132.1"/>
    <property type="match status" value="1"/>
</dbReference>
<dbReference type="PANTHER" id="PTHR21569">
    <property type="entry name" value="RIBOSOMAL PROTEIN S9"/>
    <property type="match status" value="1"/>
</dbReference>
<dbReference type="PANTHER" id="PTHR21569:SF1">
    <property type="entry name" value="SMALL RIBOSOMAL SUBUNIT PROTEIN US9M"/>
    <property type="match status" value="1"/>
</dbReference>
<dbReference type="Pfam" id="PF00380">
    <property type="entry name" value="Ribosomal_S9"/>
    <property type="match status" value="1"/>
</dbReference>
<dbReference type="SUPFAM" id="SSF54211">
    <property type="entry name" value="Ribosomal protein S5 domain 2-like"/>
    <property type="match status" value="1"/>
</dbReference>
<dbReference type="PROSITE" id="PS00360">
    <property type="entry name" value="RIBOSOMAL_S9"/>
    <property type="match status" value="1"/>
</dbReference>
<keyword id="KW-0687">Ribonucleoprotein</keyword>
<keyword id="KW-0689">Ribosomal protein</keyword>
<protein>
    <recommendedName>
        <fullName evidence="1">Small ribosomal subunit protein uS9</fullName>
    </recommendedName>
    <alternativeName>
        <fullName evidence="2">30S ribosomal protein S9</fullName>
    </alternativeName>
</protein>
<feature type="chain" id="PRO_1000051212" description="Small ribosomal subunit protein uS9">
    <location>
        <begin position="1"/>
        <end position="130"/>
    </location>
</feature>
<reference key="1">
    <citation type="journal article" date="2005" name="Proc. Natl. Acad. Sci. U.S.A.">
        <title>The psychrophilic lifestyle as revealed by the genome sequence of Colwellia psychrerythraea 34H through genomic and proteomic analyses.</title>
        <authorList>
            <person name="Methe B.A."/>
            <person name="Nelson K.E."/>
            <person name="Deming J.W."/>
            <person name="Momen B."/>
            <person name="Melamud E."/>
            <person name="Zhang X."/>
            <person name="Moult J."/>
            <person name="Madupu R."/>
            <person name="Nelson W.C."/>
            <person name="Dodson R.J."/>
            <person name="Brinkac L.M."/>
            <person name="Daugherty S.C."/>
            <person name="Durkin A.S."/>
            <person name="DeBoy R.T."/>
            <person name="Kolonay J.F."/>
            <person name="Sullivan S.A."/>
            <person name="Zhou L."/>
            <person name="Davidsen T.M."/>
            <person name="Wu M."/>
            <person name="Huston A.L."/>
            <person name="Lewis M."/>
            <person name="Weaver B."/>
            <person name="Weidman J.F."/>
            <person name="Khouri H."/>
            <person name="Utterback T.R."/>
            <person name="Feldblyum T.V."/>
            <person name="Fraser C.M."/>
        </authorList>
    </citation>
    <scope>NUCLEOTIDE SEQUENCE [LARGE SCALE GENOMIC DNA]</scope>
    <source>
        <strain>34H / ATCC BAA-681</strain>
    </source>
</reference>
<sequence>MADNQYYGTGRRKSSTARVFMKAGNGAITINKRDISEYFGRETARMVVRQPLELVEMLEKFDFNISVVGGGISGQAGAIRHGITRALMVFDETLRGELRKAGFVTRDARKVERKKVGLHKARKKPQFSKR</sequence>
<comment type="similarity">
    <text evidence="1">Belongs to the universal ribosomal protein uS9 family.</text>
</comment>